<sequence>MQISPIAPELIRLENIYVHRDERDILKNIDFSLHQNEIVTLIGPNGAGKSTLIKILLGIIFPNKGKVIAKKKLKMAYVPQKFNPSHSLPLRVCDLLDLEKCSATLREEIIQDTGISKLQTAKVQQLSGGERQRVLLARALLRQPDILVLDEPMQGLDIQSEAELYEYVRSLPERYGCAILMVSHDLQWVMQGTQRVVCLNKHICCSGLPESVQQHPEYLAIFGGQRVPYQHHHDHCAHGDHVEQCNHIDHPHIHPEPEA</sequence>
<comment type="function">
    <text evidence="1">Part of the ABC transporter complex ZnuABC involved in zinc import. Responsible for energy coupling to the transport system.</text>
</comment>
<comment type="catalytic activity">
    <reaction evidence="1">
        <text>Zn(2+)(out) + ATP(in) + H2O(in) = Zn(2+)(in) + ADP(in) + phosphate(in) + H(+)(in)</text>
        <dbReference type="Rhea" id="RHEA:29795"/>
        <dbReference type="ChEBI" id="CHEBI:15377"/>
        <dbReference type="ChEBI" id="CHEBI:15378"/>
        <dbReference type="ChEBI" id="CHEBI:29105"/>
        <dbReference type="ChEBI" id="CHEBI:30616"/>
        <dbReference type="ChEBI" id="CHEBI:43474"/>
        <dbReference type="ChEBI" id="CHEBI:456216"/>
        <dbReference type="EC" id="7.2.2.20"/>
    </reaction>
</comment>
<comment type="subunit">
    <text evidence="1">The complex is composed of two ATP-binding proteins (ZnuC), two transmembrane proteins (ZnuB) and a solute-binding protein (ZnuA).</text>
</comment>
<comment type="subcellular location">
    <subcellularLocation>
        <location evidence="1">Cell inner membrane</location>
        <topology evidence="1">Peripheral membrane protein</topology>
    </subcellularLocation>
</comment>
<comment type="similarity">
    <text evidence="1">Belongs to the ABC transporter superfamily. Zinc importer (TC 3.A.1.15.5) family.</text>
</comment>
<reference key="1">
    <citation type="journal article" date="2004" name="Nucleic Acids Res.">
        <title>Unique features revealed by the genome sequence of Acinetobacter sp. ADP1, a versatile and naturally transformation competent bacterium.</title>
        <authorList>
            <person name="Barbe V."/>
            <person name="Vallenet D."/>
            <person name="Fonknechten N."/>
            <person name="Kreimeyer A."/>
            <person name="Oztas S."/>
            <person name="Labarre L."/>
            <person name="Cruveiller S."/>
            <person name="Robert C."/>
            <person name="Duprat S."/>
            <person name="Wincker P."/>
            <person name="Ornston L.N."/>
            <person name="Weissenbach J."/>
            <person name="Marliere P."/>
            <person name="Cohen G.N."/>
            <person name="Medigue C."/>
        </authorList>
    </citation>
    <scope>NUCLEOTIDE SEQUENCE [LARGE SCALE GENOMIC DNA]</scope>
    <source>
        <strain>ATCC 33305 / BD413 / ADP1</strain>
    </source>
</reference>
<evidence type="ECO:0000255" key="1">
    <source>
        <dbReference type="HAMAP-Rule" id="MF_01725"/>
    </source>
</evidence>
<name>ZNUC_ACIAD</name>
<feature type="chain" id="PRO_0000281488" description="Zinc import ATP-binding protein ZnuC">
    <location>
        <begin position="1"/>
        <end position="259"/>
    </location>
</feature>
<feature type="domain" description="ABC transporter" evidence="1">
    <location>
        <begin position="11"/>
        <end position="225"/>
    </location>
</feature>
<feature type="binding site" evidence="1">
    <location>
        <begin position="43"/>
        <end position="50"/>
    </location>
    <ligand>
        <name>ATP</name>
        <dbReference type="ChEBI" id="CHEBI:30616"/>
    </ligand>
</feature>
<accession>Q6FFL0</accession>
<dbReference type="EC" id="7.2.2.20" evidence="1"/>
<dbReference type="EMBL" id="CR543861">
    <property type="protein sequence ID" value="CAG67147.1"/>
    <property type="molecule type" value="Genomic_DNA"/>
</dbReference>
<dbReference type="SMR" id="Q6FFL0"/>
<dbReference type="STRING" id="202950.GCA_001485005_01907"/>
<dbReference type="KEGG" id="aci:ACIAD0175"/>
<dbReference type="eggNOG" id="COG1121">
    <property type="taxonomic scope" value="Bacteria"/>
</dbReference>
<dbReference type="HOGENOM" id="CLU_000604_1_11_6"/>
<dbReference type="Proteomes" id="UP000000430">
    <property type="component" value="Chromosome"/>
</dbReference>
<dbReference type="GO" id="GO:0005886">
    <property type="term" value="C:plasma membrane"/>
    <property type="evidence" value="ECO:0007669"/>
    <property type="project" value="UniProtKB-SubCell"/>
</dbReference>
<dbReference type="GO" id="GO:0015633">
    <property type="term" value="F:ABC-type zinc transporter activity"/>
    <property type="evidence" value="ECO:0007669"/>
    <property type="project" value="UniProtKB-EC"/>
</dbReference>
<dbReference type="GO" id="GO:0005524">
    <property type="term" value="F:ATP binding"/>
    <property type="evidence" value="ECO:0007669"/>
    <property type="project" value="UniProtKB-KW"/>
</dbReference>
<dbReference type="GO" id="GO:0016887">
    <property type="term" value="F:ATP hydrolysis activity"/>
    <property type="evidence" value="ECO:0007669"/>
    <property type="project" value="InterPro"/>
</dbReference>
<dbReference type="GO" id="GO:0010043">
    <property type="term" value="P:response to zinc ion"/>
    <property type="evidence" value="ECO:0007669"/>
    <property type="project" value="TreeGrafter"/>
</dbReference>
<dbReference type="Gene3D" id="3.40.50.300">
    <property type="entry name" value="P-loop containing nucleotide triphosphate hydrolases"/>
    <property type="match status" value="1"/>
</dbReference>
<dbReference type="InterPro" id="IPR003593">
    <property type="entry name" value="AAA+_ATPase"/>
</dbReference>
<dbReference type="InterPro" id="IPR003439">
    <property type="entry name" value="ABC_transporter-like_ATP-bd"/>
</dbReference>
<dbReference type="InterPro" id="IPR017871">
    <property type="entry name" value="ABC_transporter-like_CS"/>
</dbReference>
<dbReference type="InterPro" id="IPR050153">
    <property type="entry name" value="Metal_Ion_Import_ABC"/>
</dbReference>
<dbReference type="InterPro" id="IPR027417">
    <property type="entry name" value="P-loop_NTPase"/>
</dbReference>
<dbReference type="PANTHER" id="PTHR42734">
    <property type="entry name" value="METAL TRANSPORT SYSTEM ATP-BINDING PROTEIN TM_0124-RELATED"/>
    <property type="match status" value="1"/>
</dbReference>
<dbReference type="PANTHER" id="PTHR42734:SF9">
    <property type="entry name" value="ZINC IMPORT ATP-BINDING PROTEIN ZNUC"/>
    <property type="match status" value="1"/>
</dbReference>
<dbReference type="Pfam" id="PF00005">
    <property type="entry name" value="ABC_tran"/>
    <property type="match status" value="1"/>
</dbReference>
<dbReference type="SMART" id="SM00382">
    <property type="entry name" value="AAA"/>
    <property type="match status" value="1"/>
</dbReference>
<dbReference type="SUPFAM" id="SSF52540">
    <property type="entry name" value="P-loop containing nucleoside triphosphate hydrolases"/>
    <property type="match status" value="1"/>
</dbReference>
<dbReference type="PROSITE" id="PS00211">
    <property type="entry name" value="ABC_TRANSPORTER_1"/>
    <property type="match status" value="1"/>
</dbReference>
<dbReference type="PROSITE" id="PS50893">
    <property type="entry name" value="ABC_TRANSPORTER_2"/>
    <property type="match status" value="1"/>
</dbReference>
<dbReference type="PROSITE" id="PS51298">
    <property type="entry name" value="ZNUC"/>
    <property type="match status" value="1"/>
</dbReference>
<proteinExistence type="inferred from homology"/>
<keyword id="KW-0067">ATP-binding</keyword>
<keyword id="KW-0997">Cell inner membrane</keyword>
<keyword id="KW-1003">Cell membrane</keyword>
<keyword id="KW-0406">Ion transport</keyword>
<keyword id="KW-0472">Membrane</keyword>
<keyword id="KW-0547">Nucleotide-binding</keyword>
<keyword id="KW-1278">Translocase</keyword>
<keyword id="KW-0813">Transport</keyword>
<keyword id="KW-0862">Zinc</keyword>
<keyword id="KW-0864">Zinc transport</keyword>
<gene>
    <name evidence="1" type="primary">znuC</name>
    <name type="ordered locus">ACIAD0175</name>
</gene>
<protein>
    <recommendedName>
        <fullName evidence="1">Zinc import ATP-binding protein ZnuC</fullName>
        <ecNumber evidence="1">7.2.2.20</ecNumber>
    </recommendedName>
</protein>
<organism>
    <name type="scientific">Acinetobacter baylyi (strain ATCC 33305 / BD413 / ADP1)</name>
    <dbReference type="NCBI Taxonomy" id="62977"/>
    <lineage>
        <taxon>Bacteria</taxon>
        <taxon>Pseudomonadati</taxon>
        <taxon>Pseudomonadota</taxon>
        <taxon>Gammaproteobacteria</taxon>
        <taxon>Moraxellales</taxon>
        <taxon>Moraxellaceae</taxon>
        <taxon>Acinetobacter</taxon>
    </lineage>
</organism>